<keyword id="KW-1003">Cell membrane</keyword>
<keyword id="KW-0325">Glycoprotein</keyword>
<keyword id="KW-0326">Glycosidase</keyword>
<keyword id="KW-0378">Hydrolase</keyword>
<keyword id="KW-0472">Membrane</keyword>
<keyword id="KW-0511">Multifunctional enzyme</keyword>
<keyword id="KW-1185">Reference proteome</keyword>
<keyword id="KW-0732">Signal</keyword>
<keyword id="KW-0812">Transmembrane</keyword>
<keyword id="KW-1133">Transmembrane helix</keyword>
<keyword id="KW-0865">Zymogen</keyword>
<gene>
    <name evidence="11" type="primary">Lct</name>
    <name evidence="8" type="synonym">Lph</name>
</gene>
<comment type="function">
    <text evidence="7">Broad specificity glycosidase of the intestinal brush border membrane that hydrolyzes lactose, the main sugar in mammalian milk, to produce D-glucose and D-galactose (PubMed:4752949). The mature protein is composed of two domains that catalyze the hydrolysis of beta-glucopyranosides and beta-galactopyranosides, with a preference for hydrophilic aglycones (in lactose and cellobiose) for one domain and hydrophobic aglycones (in phlorizin and glycosylceramides) for the other (PubMed:4752949).</text>
</comment>
<comment type="catalytic activity">
    <reaction evidence="7">
        <text>lactose + H2O = beta-D-galactose + D-glucose</text>
        <dbReference type="Rhea" id="RHEA:10076"/>
        <dbReference type="ChEBI" id="CHEBI:4167"/>
        <dbReference type="ChEBI" id="CHEBI:15377"/>
        <dbReference type="ChEBI" id="CHEBI:17716"/>
        <dbReference type="ChEBI" id="CHEBI:27667"/>
        <dbReference type="EC" id="3.2.1.108"/>
    </reaction>
    <physiologicalReaction direction="left-to-right" evidence="10">
        <dbReference type="Rhea" id="RHEA:10077"/>
    </physiologicalReaction>
</comment>
<comment type="catalytic activity">
    <reaction evidence="7">
        <text>phlorizin + H2O = phloretin + beta-D-glucose</text>
        <dbReference type="Rhea" id="RHEA:69639"/>
        <dbReference type="ChEBI" id="CHEBI:8113"/>
        <dbReference type="ChEBI" id="CHEBI:15377"/>
        <dbReference type="ChEBI" id="CHEBI:15903"/>
        <dbReference type="ChEBI" id="CHEBI:17276"/>
    </reaction>
    <physiologicalReaction direction="left-to-right" evidence="10">
        <dbReference type="Rhea" id="RHEA:69640"/>
    </physiologicalReaction>
</comment>
<comment type="catalytic activity">
    <reaction evidence="7">
        <text>D-cellobiose + H2O = beta-D-glucose + D-glucose</text>
        <dbReference type="Rhea" id="RHEA:30679"/>
        <dbReference type="ChEBI" id="CHEBI:4167"/>
        <dbReference type="ChEBI" id="CHEBI:15377"/>
        <dbReference type="ChEBI" id="CHEBI:15903"/>
        <dbReference type="ChEBI" id="CHEBI:17057"/>
    </reaction>
    <physiologicalReaction direction="left-to-right" evidence="10">
        <dbReference type="Rhea" id="RHEA:30680"/>
    </physiologicalReaction>
</comment>
<comment type="catalytic activity">
    <reaction evidence="1">
        <text>quercetin 4'-O-beta-D-glucoside + H2O = quercetin + beta-D-glucose</text>
        <dbReference type="Rhea" id="RHEA:69647"/>
        <dbReference type="ChEBI" id="CHEBI:15377"/>
        <dbReference type="ChEBI" id="CHEBI:15903"/>
        <dbReference type="ChEBI" id="CHEBI:57694"/>
        <dbReference type="ChEBI" id="CHEBI:187902"/>
    </reaction>
    <physiologicalReaction direction="left-to-right" evidence="1">
        <dbReference type="Rhea" id="RHEA:69648"/>
    </physiologicalReaction>
</comment>
<comment type="catalytic activity">
    <reaction evidence="1">
        <text>quercetin 3-O-beta-D-glucoside + H2O = quercetin + beta-D-glucose</text>
        <dbReference type="Rhea" id="RHEA:69655"/>
        <dbReference type="ChEBI" id="CHEBI:15377"/>
        <dbReference type="ChEBI" id="CHEBI:15903"/>
        <dbReference type="ChEBI" id="CHEBI:57694"/>
        <dbReference type="ChEBI" id="CHEBI:144437"/>
    </reaction>
    <physiologicalReaction direction="left-to-right" evidence="1">
        <dbReference type="Rhea" id="RHEA:69656"/>
    </physiologicalReaction>
</comment>
<comment type="catalytic activity">
    <reaction evidence="3">
        <text>kaempferol 3-O-beta-D-glucoside + H2O = kaempferol + beta-D-glucose</text>
        <dbReference type="Rhea" id="RHEA:69659"/>
        <dbReference type="ChEBI" id="CHEBI:15377"/>
        <dbReference type="ChEBI" id="CHEBI:15903"/>
        <dbReference type="ChEBI" id="CHEBI:58573"/>
        <dbReference type="ChEBI" id="CHEBI:169942"/>
    </reaction>
    <physiologicalReaction direction="left-to-right" evidence="3">
        <dbReference type="Rhea" id="RHEA:69660"/>
    </physiologicalReaction>
</comment>
<comment type="catalytic activity">
    <reaction evidence="3">
        <text>luteolin 7-O-beta-D-glucoside + H2O = luteolin + beta-D-glucose</text>
        <dbReference type="Rhea" id="RHEA:69663"/>
        <dbReference type="ChEBI" id="CHEBI:15377"/>
        <dbReference type="ChEBI" id="CHEBI:15903"/>
        <dbReference type="ChEBI" id="CHEBI:57545"/>
        <dbReference type="ChEBI" id="CHEBI:77791"/>
    </reaction>
    <physiologicalReaction direction="left-to-right" evidence="3">
        <dbReference type="Rhea" id="RHEA:69664"/>
    </physiologicalReaction>
</comment>
<comment type="catalytic activity">
    <reaction evidence="3">
        <text>luteolin 4'-O-beta-D-glucoside + H2O = luteolin + beta-D-glucose</text>
        <dbReference type="Rhea" id="RHEA:69667"/>
        <dbReference type="ChEBI" id="CHEBI:15377"/>
        <dbReference type="ChEBI" id="CHEBI:15903"/>
        <dbReference type="ChEBI" id="CHEBI:57545"/>
        <dbReference type="ChEBI" id="CHEBI:187903"/>
    </reaction>
    <physiologicalReaction direction="left-to-right" evidence="3">
        <dbReference type="Rhea" id="RHEA:69668"/>
    </physiologicalReaction>
</comment>
<comment type="catalytic activity">
    <reaction evidence="3">
        <text>(2S)-naringenin 7-O-beta-D-glucoside + H2O = (2S)-naringenin + beta-D-glucose</text>
        <dbReference type="Rhea" id="RHEA:69671"/>
        <dbReference type="ChEBI" id="CHEBI:15377"/>
        <dbReference type="ChEBI" id="CHEBI:15903"/>
        <dbReference type="ChEBI" id="CHEBI:17846"/>
        <dbReference type="ChEBI" id="CHEBI:28327"/>
    </reaction>
    <physiologicalReaction direction="left-to-right" evidence="3">
        <dbReference type="Rhea" id="RHEA:69672"/>
    </physiologicalReaction>
</comment>
<comment type="catalytic activity">
    <reaction evidence="3">
        <text>eriodictyol-7-O-beta-D-glucoside + H2O = (S)-eriodictyol + beta-D-glucose</text>
        <dbReference type="Rhea" id="RHEA:69675"/>
        <dbReference type="ChEBI" id="CHEBI:15377"/>
        <dbReference type="ChEBI" id="CHEBI:15903"/>
        <dbReference type="ChEBI" id="CHEBI:28412"/>
        <dbReference type="ChEBI" id="CHEBI:139458"/>
    </reaction>
    <physiologicalReaction direction="left-to-right" evidence="3">
        <dbReference type="Rhea" id="RHEA:69676"/>
    </physiologicalReaction>
</comment>
<comment type="catalytic activity">
    <reaction evidence="3">
        <text>apigenin 7-O-beta-D-glucoside + H2O = apigenin + beta-D-glucose</text>
        <dbReference type="Rhea" id="RHEA:69679"/>
        <dbReference type="ChEBI" id="CHEBI:15377"/>
        <dbReference type="ChEBI" id="CHEBI:15903"/>
        <dbReference type="ChEBI" id="CHEBI:58470"/>
        <dbReference type="ChEBI" id="CHEBI:77722"/>
    </reaction>
    <physiologicalReaction direction="left-to-right" evidence="3">
        <dbReference type="Rhea" id="RHEA:69680"/>
    </physiologicalReaction>
</comment>
<comment type="catalytic activity">
    <reaction evidence="3">
        <text>daidzein 7-O-beta-D-glucoside + H2O = daidzein + beta-D-glucose + H(+)</text>
        <dbReference type="Rhea" id="RHEA:69683"/>
        <dbReference type="ChEBI" id="CHEBI:15377"/>
        <dbReference type="ChEBI" id="CHEBI:15378"/>
        <dbReference type="ChEBI" id="CHEBI:15903"/>
        <dbReference type="ChEBI" id="CHEBI:42202"/>
        <dbReference type="ChEBI" id="CHEBI:77764"/>
    </reaction>
    <physiologicalReaction direction="left-to-right" evidence="3">
        <dbReference type="Rhea" id="RHEA:69684"/>
    </physiologicalReaction>
</comment>
<comment type="catalytic activity">
    <reaction evidence="3">
        <text>genistein 7-O-beta-D-glucoside + H2O = genistein + beta-D-glucose</text>
        <dbReference type="Rhea" id="RHEA:69687"/>
        <dbReference type="ChEBI" id="CHEBI:15377"/>
        <dbReference type="ChEBI" id="CHEBI:15903"/>
        <dbReference type="ChEBI" id="CHEBI:74224"/>
        <dbReference type="ChEBI" id="CHEBI:140305"/>
    </reaction>
    <physiologicalReaction direction="left-to-right" evidence="3">
        <dbReference type="Rhea" id="RHEA:69688"/>
    </physiologicalReaction>
</comment>
<comment type="catalytic activity">
    <reaction evidence="7">
        <text>a beta-D-galactosyl-N-acylsphingosine + H2O = a ceramide + beta-D-galactose.</text>
        <dbReference type="EC" id="3.2.1.62"/>
    </reaction>
</comment>
<comment type="catalytic activity">
    <reaction evidence="7">
        <text>beta-D-glucosyl-(1&lt;-&gt;1')-N-hexadecanoylsphing-4-enine + H2O = N-hexadecanoylsphing-4-enine + beta-D-glucose</text>
        <dbReference type="Rhea" id="RHEA:69699"/>
        <dbReference type="ChEBI" id="CHEBI:15377"/>
        <dbReference type="ChEBI" id="CHEBI:15903"/>
        <dbReference type="ChEBI" id="CHEBI:72959"/>
        <dbReference type="ChEBI" id="CHEBI:84716"/>
    </reaction>
    <physiologicalReaction direction="left-to-right" evidence="10">
        <dbReference type="Rhea" id="RHEA:69700"/>
    </physiologicalReaction>
</comment>
<comment type="catalytic activity">
    <reaction evidence="7">
        <text>beta-D-galactosyl-(1&lt;-&gt;1')-N-hexadecanoylsphing-4-enine + H2O = beta-D-galactose + N-hexadecanoylsphing-4-enine</text>
        <dbReference type="Rhea" id="RHEA:69703"/>
        <dbReference type="ChEBI" id="CHEBI:15377"/>
        <dbReference type="ChEBI" id="CHEBI:27667"/>
        <dbReference type="ChEBI" id="CHEBI:72959"/>
        <dbReference type="ChEBI" id="CHEBI:83259"/>
    </reaction>
    <physiologicalReaction direction="left-to-right" evidence="10">
        <dbReference type="Rhea" id="RHEA:69704"/>
    </physiologicalReaction>
</comment>
<comment type="catalytic activity">
    <reaction evidence="7">
        <text>beta-D-galactosyl-(1&lt;-&gt;1')-N-hexadecanoylsphinganine + H2O = N-hexadecanoylsphinganine + beta-D-galactose</text>
        <dbReference type="Rhea" id="RHEA:69707"/>
        <dbReference type="ChEBI" id="CHEBI:15377"/>
        <dbReference type="ChEBI" id="CHEBI:27667"/>
        <dbReference type="ChEBI" id="CHEBI:67042"/>
        <dbReference type="ChEBI" id="CHEBI:84783"/>
    </reaction>
    <physiologicalReaction direction="left-to-right" evidence="10">
        <dbReference type="Rhea" id="RHEA:69708"/>
    </physiologicalReaction>
</comment>
<comment type="catalytic activity">
    <reaction evidence="7">
        <text>beta-D-glucosyl-(1&lt;-&gt;1')-N-hexadecanoylsphinganine + H2O = N-hexadecanoylsphinganine + beta-D-glucose</text>
        <dbReference type="Rhea" id="RHEA:69711"/>
        <dbReference type="ChEBI" id="CHEBI:15377"/>
        <dbReference type="ChEBI" id="CHEBI:15903"/>
        <dbReference type="ChEBI" id="CHEBI:67042"/>
        <dbReference type="ChEBI" id="CHEBI:84782"/>
    </reaction>
    <physiologicalReaction direction="left-to-right" evidence="10">
        <dbReference type="Rhea" id="RHEA:69712"/>
    </physiologicalReaction>
</comment>
<comment type="subunit">
    <text evidence="1">Homodimer.</text>
</comment>
<comment type="subcellular location">
    <subcellularLocation>
        <location evidence="1">Apical cell membrane</location>
        <topology evidence="1">Single-pass type I membrane protein</topology>
    </subcellularLocation>
    <text evidence="2">Brush border.</text>
</comment>
<comment type="tissue specificity">
    <text evidence="6">Intestine.</text>
</comment>
<comment type="domain">
    <text evidence="1">The glycosyl hydrolase-1 3/region III carries the phlorizin hydrolase/glycosylceramidase activities.</text>
</comment>
<comment type="domain">
    <text evidence="1">The glycosyl hydrolase-1 4/region IV carries the lactase activity.</text>
</comment>
<comment type="PTM">
    <text evidence="1">N-glycosylated.</text>
</comment>
<comment type="similarity">
    <text evidence="9">Belongs to the glycosyl hydrolase 1 family.</text>
</comment>
<name>LPH_RAT</name>
<protein>
    <recommendedName>
        <fullName evidence="10">Lactase/phlorizin hydrolase</fullName>
    </recommendedName>
    <alternativeName>
        <fullName evidence="10">Lactase/glycosylceramidase</fullName>
    </alternativeName>
    <domain>
        <recommendedName>
            <fullName evidence="10">Lactase</fullName>
            <ecNumber evidence="7">3.2.1.108</ecNumber>
        </recommendedName>
    </domain>
    <domain>
        <recommendedName>
            <fullName evidence="10">Glycosylceramidase</fullName>
            <ecNumber evidence="7">3.2.1.62</ecNumber>
        </recommendedName>
        <alternativeName>
            <fullName evidence="10">Phlorizin hydrolase</fullName>
        </alternativeName>
    </domain>
</protein>
<sequence length="1928" mass="217268">MELPWTALFLSTVLLGLSCQGSDWESDRNFISAAGPLTNDLVLNLNYPPGKQGSDVVSGNTDHLLCQQPLPSFLSQYFSSLRASQVTHYKVLLSWAQLLPTGSSKNPDQEAVQCYRQLLQSLKDAQLEPMVVLCHQTPPTSSAIQREGAFADLFADYATLAFQSFGDLVEIWFTFSDLEKVIMDLPHKDLKASALQTLSNAHRRAFEIYHRKFSSQGGKLSVVLKAEDIPELLPDPALAALVQGSVDFLSLDLSYECQSVATLPQKLSELQNLEPKVKVFIYTLKLEDCPATGTSPSSLLISLLEAINKDQIQTVGFDVNAFLSCTSNSEESPSCSLTDSLALQTEQQQETAVPSSPGSAYQRVWAAFANQSREERDAFLQDVFPEGFLWGISTGAFNVEGGWAEGGRGPSIWDHYGNLNAAEGQATAKVASDSYHKPASDVALLRGIRAQVYKFSISWSGLFPLGQKSTPNRQGVAYYNKLIDRLLDSHIEPMATLFHWDLPQALQEQGGWQNESVVEAFLDYAAFCFSTFGDRVKLWVTFHEPWVMSYAGYGTGQHAPAISDPGMASFKVAHLILKAHARTWHLYDLHHRLQQQGRVGIVLNSDLAEPLDRKSPQDLAAAERFLHFMLGWFAHPIFVDGDYPTTSAQIQHINQQCGHPLAQLPEFTEAEKRLLKGSADFLGLSHYTSRLISKAGRQTCTSSYDNIGGFSQHVDPEWPQTASPWIRVVPWGIRRLLRFASMEYTKGKLPIFLAGNGMPVGEEADLFDDSVRVNYFNWYINEVLKAVKEDLVDVRSYIVRSLIDGYEGPLGFSQRFGLYHVNFNDSSRPRTPRKSAYLFTSIIEKNGFSAKKVKRNPLPVRADFTSRARVTDSLPSEVPSKAKISVEKFSKQPRFERDLFYDGRFRDDFLWGVSSSPYQIEGGWNADGKGPSIWDNFTHTPGNGVKDNATGDVACDSYHQLDADLNILRTLKVKSYRFSISWSRIFPTGRNSTINKQGVDYYNRLIDSLVDNNIFPMVTLFHWDLPQALQDIGGWENPSLIELFDSYADYCFKTFGDRVKFWMTFNEPWCHVVLGYSSGIFPPSVQEPGWLPYKVSHIVIKAHARVYHTYDEKYRSEQKGVISLSLNTHWAEPKDPGLQRDVEAADRMLQFTMGWFAHPIFKNGDYPDVMKWTVGNRSELQHLASSRLPTFTEEEKNYVRGTADVFCHNTYTSVFVQHSTPRLNPPSYDDDMELKLIEMNSSTGVMHQDVPWGTRRLLNWIKEEYGNIPIYITENGQGLENPTLDDTERIFYHKTYINEALKAYKLDGVDLRGYSAWTLMDDFEWLLGYTMRFGLYYVDFNHVSRPRTARASARYYPDLIANNGMPLAREDEFLYGEFPKGFIWSAASASYQVEGAWRADGKGLSIWDTFSHTPLRIGNDDNGDVACDSYHKIAEDVVALQNLGVSHYRFSIAWSRILPDGTTKFINEAGLSYYVRFIDALLAAGITPQVTIYHWDLPQALQDVGGWENETIVQRFKEYADVLFQRLGDRVKFWITLNEPFVIAAQGYGTGVSAPGISFRPGTAPYIAGHNLIKAHAEAWHLYNDVYRARQGGTISITISSDWGEPRDPTNREHVEAARSYVQFMGGWFAHPIFKNGDYPEVMKTRIRDRSLGAGLNKSRLPEFTESEKSRIKGTFDFFGFNHNTTVLAYNLDYPAAFSSFDADRGVASIADSSWPVSGSFWLKVTPFGFRRILNWLKEEYNNPPIYVTENGVSRRGEPELNDTDRIYYLRSYINEALKAVHDKVDLRGYTVWSIMDNFEWATGFAERFGVHFVNRSDPSLPRIPRASAKFYATIVRCNGFPDPAQGPHPCLQQPEDAAPTASPVQSEVPFLGLMLGIAEAQTALYVLFALLLLGACSLAFLTYNTGRRSKQGNAQPSQHQLSPISSF</sequence>
<proteinExistence type="evidence at protein level"/>
<reference key="1">
    <citation type="journal article" date="1991" name="Gene">
        <title>Sequence of the precursor of intestinal lactase-phlorizin hydrolase from fetal rat.</title>
        <authorList>
            <person name="Duluc I."/>
            <person name="Boukamel R."/>
            <person name="Mantei N."/>
            <person name="Semenza G."/>
            <person name="Raul F."/>
            <person name="Freund J.-N."/>
        </authorList>
    </citation>
    <scope>NUCLEOTIDE SEQUENCE [GENOMIC DNA]</scope>
    <source>
        <strain>Wistar</strain>
        <tissue>Intestine</tissue>
    </source>
</reference>
<reference key="2">
    <citation type="journal article" date="1992" name="DNA Seq.">
        <title>The rat LPH gene 5' region: comparative structure with the human gene.</title>
        <authorList>
            <person name="Boukamel R."/>
            <person name="Freund J.-N."/>
        </authorList>
    </citation>
    <scope>NUCLEOTIDE SEQUENCE [GENOMIC DNA] OF 1-192</scope>
    <source>
        <strain>Sprague-Dawley</strain>
    </source>
</reference>
<reference key="3">
    <citation type="journal article" date="1990" name="J. Biol. Chem.">
        <title>Coordinate expression of lactase-phlorizin hydrolase mRNA and enzyme levels in rat intestine during development.</title>
        <authorList>
            <person name="Bueller H.A."/>
            <person name="Kothe M.J."/>
            <person name="Goldman D.A."/>
            <person name="Grubman S.A."/>
            <person name="Sasak W.V."/>
            <person name="Matsudaira P.T."/>
            <person name="Montgomery R.K."/>
            <person name="Grand R.J."/>
        </authorList>
    </citation>
    <scope>NUCLEOTIDE SEQUENCE OF 1288-1370</scope>
    <scope>TISSUE SPECIFICITY</scope>
</reference>
<reference key="4">
    <citation type="journal article" date="1973" name="J. Biol. Chem.">
        <title>On the identity between the small intestinal enzymes phlorizin hydrolase and glycosylceramidase.</title>
        <authorList>
            <person name="Leese H.J."/>
            <person name="Semenza G."/>
        </authorList>
    </citation>
    <scope>FUNCTION</scope>
    <scope>CATALYTIC ACTIVITY</scope>
</reference>
<feature type="signal peptide" evidence="4">
    <location>
        <begin position="1"/>
        <end position="21"/>
    </location>
</feature>
<feature type="propeptide" id="PRO_0000011771" description="XBetaGly" evidence="2">
    <location>
        <begin position="22"/>
        <end position="867"/>
    </location>
</feature>
<feature type="chain" id="PRO_0000011772" description="Lactase/phlorizin hydrolase" evidence="2">
    <location>
        <begin position="868"/>
        <end position="1928"/>
    </location>
</feature>
<feature type="topological domain" description="Extracellular" evidence="4">
    <location>
        <begin position="22"/>
        <end position="1883"/>
    </location>
</feature>
<feature type="transmembrane region" description="Helical" evidence="4">
    <location>
        <begin position="1884"/>
        <end position="1902"/>
    </location>
</feature>
<feature type="topological domain" description="Cytoplasmic" evidence="4">
    <location>
        <begin position="1903"/>
        <end position="1928"/>
    </location>
</feature>
<feature type="region of interest" description="Glycosyl hydrolase-1 1; Region I" evidence="2 4">
    <location>
        <begin position="46"/>
        <end position="289"/>
    </location>
</feature>
<feature type="region of interest" description="Glycosyl hydrolase-1 2; Region II" evidence="2 4">
    <location>
        <begin position="364"/>
        <end position="856"/>
    </location>
</feature>
<feature type="region of interest" description="Glycosyl hydrolase-1 3; Region III. Phlorizin hydrolase/Glycosylceramidase activity" evidence="2 4">
    <location>
        <begin position="904"/>
        <end position="1367"/>
    </location>
</feature>
<feature type="region of interest" description="Glycosyl hydrolase-1 4; Region IV. Lactase activity" evidence="2 4">
    <location>
        <begin position="1374"/>
        <end position="1847"/>
    </location>
</feature>
<feature type="active site" description="Proton donor; for phlorizin hydrolase/Glycosylceramidase activity" evidence="2">
    <location>
        <position position="1067"/>
    </location>
</feature>
<feature type="active site" description="Nucleophile; for phlorizin hydrolase/Glycosylceramidase activity" evidence="2 5">
    <location>
        <position position="1274"/>
    </location>
</feature>
<feature type="active site" description="Proton donor; for lactase activity" evidence="2">
    <location>
        <position position="1539"/>
    </location>
</feature>
<feature type="active site" description="Nucleophile; for lactase activity" evidence="2 5">
    <location>
        <position position="1750"/>
    </location>
</feature>
<feature type="glycosylation site" description="N-linked (GlcNAc...) asparagine" evidence="4">
    <location>
        <position position="370"/>
    </location>
</feature>
<feature type="glycosylation site" description="N-linked (GlcNAc...) asparagine" evidence="4">
    <location>
        <position position="514"/>
    </location>
</feature>
<feature type="glycosylation site" description="N-linked (GlcNAc...) asparagine" evidence="4">
    <location>
        <position position="824"/>
    </location>
</feature>
<feature type="glycosylation site" description="N-linked (GlcNAc...) asparagine" evidence="4">
    <location>
        <position position="936"/>
    </location>
</feature>
<feature type="glycosylation site" description="N-linked (GlcNAc...) asparagine" evidence="4">
    <location>
        <position position="948"/>
    </location>
</feature>
<feature type="glycosylation site" description="N-linked (GlcNAc...) asparagine" evidence="4">
    <location>
        <position position="991"/>
    </location>
</feature>
<feature type="glycosylation site" description="N-linked (GlcNAc...) asparagine" evidence="4">
    <location>
        <position position="1037"/>
    </location>
</feature>
<feature type="glycosylation site" description="N-linked (GlcNAc...) asparagine" evidence="4">
    <location>
        <position position="1176"/>
    </location>
</feature>
<feature type="glycosylation site" description="N-linked (GlcNAc...) asparagine" evidence="4">
    <location>
        <position position="1240"/>
    </location>
</feature>
<feature type="glycosylation site" description="N-linked (GlcNAc...) asparagine" evidence="4">
    <location>
        <position position="1281"/>
    </location>
</feature>
<feature type="glycosylation site" description="N-linked (GlcNAc...) asparagine" evidence="4">
    <location>
        <position position="1509"/>
    </location>
</feature>
<feature type="glycosylation site" description="N-linked (GlcNAc...) asparagine" evidence="4">
    <location>
        <position position="1657"/>
    </location>
</feature>
<feature type="glycosylation site" description="N-linked (GlcNAc...) asparagine" evidence="4">
    <location>
        <position position="1684"/>
    </location>
</feature>
<feature type="glycosylation site" description="N-linked (GlcNAc...) asparagine" evidence="4">
    <location>
        <position position="1762"/>
    </location>
</feature>
<feature type="glycosylation site" description="N-linked (GlcNAc...) asparagine" evidence="4">
    <location>
        <position position="1815"/>
    </location>
</feature>
<feature type="sequence conflict" description="In Ref. 1; AAA41539." evidence="9" ref="1">
    <original>A</original>
    <variation>R</variation>
    <location>
        <position position="7"/>
    </location>
</feature>
<feature type="sequence conflict" description="In Ref. 1; AAA41539." evidence="9" ref="1">
    <original>Q</original>
    <variation>E</variation>
    <location>
        <position position="113"/>
    </location>
</feature>
<feature type="sequence conflict" description="In Ref. 1; AAA41539." evidence="9" ref="1">
    <original>E</original>
    <variation>D</variation>
    <location>
        <position position="207"/>
    </location>
</feature>
<feature type="sequence conflict" description="In Ref. 3." evidence="9" ref="3">
    <original>Y</original>
    <variation>H</variation>
    <location>
        <position position="1337"/>
    </location>
</feature>
<feature type="sequence conflict" description="In Ref. 3." evidence="9" ref="3">
    <original>PDL</original>
    <variation>AEV</variation>
    <location>
        <begin position="1357"/>
        <end position="1359"/>
    </location>
</feature>
<feature type="sequence conflict" description="In Ref. 3." evidence="9" ref="3">
    <original>RE</original>
    <variation>GK</variation>
    <location>
        <begin position="1369"/>
        <end position="1370"/>
    </location>
</feature>
<organism>
    <name type="scientific">Rattus norvegicus</name>
    <name type="common">Rat</name>
    <dbReference type="NCBI Taxonomy" id="10116"/>
    <lineage>
        <taxon>Eukaryota</taxon>
        <taxon>Metazoa</taxon>
        <taxon>Chordata</taxon>
        <taxon>Craniata</taxon>
        <taxon>Vertebrata</taxon>
        <taxon>Euteleostomi</taxon>
        <taxon>Mammalia</taxon>
        <taxon>Eutheria</taxon>
        <taxon>Euarchontoglires</taxon>
        <taxon>Glires</taxon>
        <taxon>Rodentia</taxon>
        <taxon>Myomorpha</taxon>
        <taxon>Muroidea</taxon>
        <taxon>Muridae</taxon>
        <taxon>Murinae</taxon>
        <taxon>Rattus</taxon>
    </lineage>
</organism>
<dbReference type="EC" id="3.2.1.108" evidence="7"/>
<dbReference type="EC" id="3.2.1.62" evidence="7"/>
<dbReference type="EMBL" id="X56748">
    <property type="protein sequence ID" value="CAA40070.1"/>
    <property type="molecule type" value="Genomic_DNA"/>
</dbReference>
<dbReference type="EMBL" id="X56747">
    <property type="protein sequence ID" value="CAA40069.1"/>
    <property type="molecule type" value="mRNA"/>
</dbReference>
<dbReference type="EMBL" id="L04635">
    <property type="protein sequence ID" value="AAA41539.1"/>
    <property type="molecule type" value="Genomic_DNA"/>
</dbReference>
<dbReference type="PIR" id="JS0610">
    <property type="entry name" value="JS0610"/>
</dbReference>
<dbReference type="SMR" id="Q02401"/>
<dbReference type="FunCoup" id="Q02401">
    <property type="interactions" value="2"/>
</dbReference>
<dbReference type="STRING" id="10116.ENSRNOP00000004908"/>
<dbReference type="BindingDB" id="Q02401"/>
<dbReference type="ChEMBL" id="CHEMBL3389"/>
<dbReference type="DrugCentral" id="Q02401"/>
<dbReference type="CAZy" id="GH1">
    <property type="family name" value="Glycoside Hydrolase Family 1"/>
</dbReference>
<dbReference type="GlyCosmos" id="Q02401">
    <property type="glycosylation" value="15 sites, No reported glycans"/>
</dbReference>
<dbReference type="GlyGen" id="Q02401">
    <property type="glycosylation" value="15 sites"/>
</dbReference>
<dbReference type="iPTMnet" id="Q02401"/>
<dbReference type="PhosphoSitePlus" id="Q02401"/>
<dbReference type="PaxDb" id="10116-ENSRNOP00000004908"/>
<dbReference type="UCSC" id="RGD:620823">
    <property type="organism name" value="rat"/>
</dbReference>
<dbReference type="AGR" id="RGD:620823"/>
<dbReference type="RGD" id="620823">
    <property type="gene designation" value="Lct"/>
</dbReference>
<dbReference type="eggNOG" id="KOG0626">
    <property type="taxonomic scope" value="Eukaryota"/>
</dbReference>
<dbReference type="InParanoid" id="Q02401"/>
<dbReference type="PhylomeDB" id="Q02401"/>
<dbReference type="BRENDA" id="3.2.1.108">
    <property type="organism ID" value="5301"/>
</dbReference>
<dbReference type="BRENDA" id="3.7.1.4">
    <property type="organism ID" value="5301"/>
</dbReference>
<dbReference type="Reactome" id="R-RNO-189085">
    <property type="pathway name" value="Digestion of dietary carbohydrate"/>
</dbReference>
<dbReference type="PRO" id="PR:Q02401"/>
<dbReference type="Proteomes" id="UP000002494">
    <property type="component" value="Unplaced"/>
</dbReference>
<dbReference type="GO" id="GO:0005903">
    <property type="term" value="C:brush border"/>
    <property type="evidence" value="ECO:0000314"/>
    <property type="project" value="RGD"/>
</dbReference>
<dbReference type="GO" id="GO:0098591">
    <property type="term" value="C:external side of apical plasma membrane"/>
    <property type="evidence" value="ECO:0000250"/>
    <property type="project" value="UniProtKB"/>
</dbReference>
<dbReference type="GO" id="GO:0008422">
    <property type="term" value="F:beta-glucosidase activity"/>
    <property type="evidence" value="ECO:0000314"/>
    <property type="project" value="UniProtKB"/>
</dbReference>
<dbReference type="GO" id="GO:0080079">
    <property type="term" value="F:cellobiose glucosidase activity"/>
    <property type="evidence" value="ECO:0007669"/>
    <property type="project" value="RHEA"/>
</dbReference>
<dbReference type="GO" id="GO:0004336">
    <property type="term" value="F:galactosylceramidase activity"/>
    <property type="evidence" value="ECO:0000314"/>
    <property type="project" value="UniProtKB"/>
</dbReference>
<dbReference type="GO" id="GO:0004348">
    <property type="term" value="F:glucosylceramidase activity"/>
    <property type="evidence" value="ECO:0000314"/>
    <property type="project" value="UniProtKB"/>
</dbReference>
<dbReference type="GO" id="GO:0000016">
    <property type="term" value="F:lactase activity"/>
    <property type="evidence" value="ECO:0000314"/>
    <property type="project" value="UniProtKB"/>
</dbReference>
<dbReference type="GO" id="GO:0140749">
    <property type="term" value="F:phlorizin hydrolase activity"/>
    <property type="evidence" value="ECO:0000314"/>
    <property type="project" value="UniProtKB"/>
</dbReference>
<dbReference type="GO" id="GO:0042803">
    <property type="term" value="F:protein homodimerization activity"/>
    <property type="evidence" value="ECO:0000250"/>
    <property type="project" value="UniProtKB"/>
</dbReference>
<dbReference type="GO" id="GO:0016740">
    <property type="term" value="F:transferase activity"/>
    <property type="evidence" value="ECO:0000314"/>
    <property type="project" value="RGD"/>
</dbReference>
<dbReference type="GO" id="GO:2000892">
    <property type="term" value="P:cellobiose catabolic process"/>
    <property type="evidence" value="ECO:0000314"/>
    <property type="project" value="UniProtKB"/>
</dbReference>
<dbReference type="GO" id="GO:0046477">
    <property type="term" value="P:glycosylceramide catabolic process"/>
    <property type="evidence" value="ECO:0000314"/>
    <property type="project" value="UniProtKB"/>
</dbReference>
<dbReference type="GO" id="GO:0005990">
    <property type="term" value="P:lactose catabolic process"/>
    <property type="evidence" value="ECO:0000314"/>
    <property type="project" value="UniProtKB"/>
</dbReference>
<dbReference type="GO" id="GO:1901733">
    <property type="term" value="P:quercetin catabolic process"/>
    <property type="evidence" value="ECO:0000250"/>
    <property type="project" value="UniProtKB"/>
</dbReference>
<dbReference type="GO" id="GO:0043627">
    <property type="term" value="P:response to estrogen"/>
    <property type="evidence" value="ECO:0000270"/>
    <property type="project" value="RGD"/>
</dbReference>
<dbReference type="GO" id="GO:0045471">
    <property type="term" value="P:response to ethanol"/>
    <property type="evidence" value="ECO:0000314"/>
    <property type="project" value="RGD"/>
</dbReference>
<dbReference type="GO" id="GO:0009725">
    <property type="term" value="P:response to hormone"/>
    <property type="evidence" value="ECO:0000270"/>
    <property type="project" value="RGD"/>
</dbReference>
<dbReference type="GO" id="GO:0001666">
    <property type="term" value="P:response to hypoxia"/>
    <property type="evidence" value="ECO:0000314"/>
    <property type="project" value="RGD"/>
</dbReference>
<dbReference type="GO" id="GO:0010040">
    <property type="term" value="P:response to iron(II) ion"/>
    <property type="evidence" value="ECO:0000314"/>
    <property type="project" value="RGD"/>
</dbReference>
<dbReference type="GO" id="GO:0010288">
    <property type="term" value="P:response to lead ion"/>
    <property type="evidence" value="ECO:0000314"/>
    <property type="project" value="RGD"/>
</dbReference>
<dbReference type="GO" id="GO:0010045">
    <property type="term" value="P:response to nickel cation"/>
    <property type="evidence" value="ECO:0000314"/>
    <property type="project" value="RGD"/>
</dbReference>
<dbReference type="GO" id="GO:0007584">
    <property type="term" value="P:response to nutrient"/>
    <property type="evidence" value="ECO:0000314"/>
    <property type="project" value="RGD"/>
</dbReference>
<dbReference type="GO" id="GO:0042594">
    <property type="term" value="P:response to starvation"/>
    <property type="evidence" value="ECO:0000270"/>
    <property type="project" value="RGD"/>
</dbReference>
<dbReference type="GO" id="GO:0009744">
    <property type="term" value="P:response to sucrose"/>
    <property type="evidence" value="ECO:0000270"/>
    <property type="project" value="RGD"/>
</dbReference>
<dbReference type="GO" id="GO:0009410">
    <property type="term" value="P:response to xenobiotic stimulus"/>
    <property type="evidence" value="ECO:0000314"/>
    <property type="project" value="RGD"/>
</dbReference>
<dbReference type="FunFam" id="3.20.20.80:FF:000117">
    <property type="entry name" value="Lactase"/>
    <property type="match status" value="1"/>
</dbReference>
<dbReference type="FunFam" id="3.20.20.80:FF:000013">
    <property type="entry name" value="lactase-phlorizin hydrolase"/>
    <property type="match status" value="3"/>
</dbReference>
<dbReference type="Gene3D" id="3.20.20.80">
    <property type="entry name" value="Glycosidases"/>
    <property type="match status" value="4"/>
</dbReference>
<dbReference type="InterPro" id="IPR001360">
    <property type="entry name" value="Glyco_hydro_1"/>
</dbReference>
<dbReference type="InterPro" id="IPR018120">
    <property type="entry name" value="Glyco_hydro_1_AS"/>
</dbReference>
<dbReference type="InterPro" id="IPR033132">
    <property type="entry name" value="Glyco_hydro_1_N_CS"/>
</dbReference>
<dbReference type="InterPro" id="IPR017853">
    <property type="entry name" value="Glycoside_hydrolase_SF"/>
</dbReference>
<dbReference type="PANTHER" id="PTHR10353">
    <property type="entry name" value="GLYCOSYL HYDROLASE"/>
    <property type="match status" value="1"/>
</dbReference>
<dbReference type="PANTHER" id="PTHR10353:SF36">
    <property type="entry name" value="LP05116P"/>
    <property type="match status" value="1"/>
</dbReference>
<dbReference type="Pfam" id="PF00232">
    <property type="entry name" value="Glyco_hydro_1"/>
    <property type="match status" value="4"/>
</dbReference>
<dbReference type="PRINTS" id="PR00131">
    <property type="entry name" value="GLHYDRLASE1"/>
</dbReference>
<dbReference type="SUPFAM" id="SSF51445">
    <property type="entry name" value="(Trans)glycosidases"/>
    <property type="match status" value="4"/>
</dbReference>
<dbReference type="PROSITE" id="PS00572">
    <property type="entry name" value="GLYCOSYL_HYDROL_F1_1"/>
    <property type="match status" value="1"/>
</dbReference>
<dbReference type="PROSITE" id="PS00653">
    <property type="entry name" value="GLYCOSYL_HYDROL_F1_2"/>
    <property type="match status" value="2"/>
</dbReference>
<evidence type="ECO:0000250" key="1">
    <source>
        <dbReference type="UniProtKB" id="P09848"/>
    </source>
</evidence>
<evidence type="ECO:0000250" key="2">
    <source>
        <dbReference type="UniProtKB" id="P09849"/>
    </source>
</evidence>
<evidence type="ECO:0000250" key="3">
    <source>
        <dbReference type="UniProtKB" id="W5PLZ6"/>
    </source>
</evidence>
<evidence type="ECO:0000255" key="4"/>
<evidence type="ECO:0000255" key="5">
    <source>
        <dbReference type="PROSITE-ProRule" id="PRU10055"/>
    </source>
</evidence>
<evidence type="ECO:0000269" key="6">
    <source>
    </source>
</evidence>
<evidence type="ECO:0000269" key="7">
    <source>
    </source>
</evidence>
<evidence type="ECO:0000303" key="8">
    <source>
    </source>
</evidence>
<evidence type="ECO:0000305" key="9"/>
<evidence type="ECO:0000305" key="10">
    <source>
    </source>
</evidence>
<evidence type="ECO:0000312" key="11">
    <source>
        <dbReference type="RGD" id="620823"/>
    </source>
</evidence>
<accession>Q02401</accession>
<accession>Q63712</accession>
<accession>Q63719</accession>